<comment type="function">
    <text evidence="2">Involved in the synthesis of both tocopherols and tocotrienols (vitamin E), which presumably protect photosynthetic complexes from oxidative stress. Catalyzes the conversion of 2-methyl-6-phytyl-1,4-hydroquinone and 2,3-dimethyl-5-phytyl-1,4-hydroquinone (DMPQ) to delta- and gamma-tocopherol respectively. Also converts 2,3-dimethyl-5-geranylgeranyl-1,4-hydroquinone (DMGQ) to gamma-tocotrienol.</text>
</comment>
<comment type="catalytic activity">
    <reaction>
        <text>delta-tocopherol = 2-methyl-6-phytyl-1,4-benzene-1,4-diol</text>
        <dbReference type="Rhea" id="RHEA:37987"/>
        <dbReference type="ChEBI" id="CHEBI:47772"/>
        <dbReference type="ChEBI" id="CHEBI:75920"/>
        <dbReference type="EC" id="5.5.1.24"/>
    </reaction>
</comment>
<comment type="catalytic activity">
    <reaction>
        <text>gamma-tocopherol = 2,3-dimethyl-6-phytylbenzene-1,4-diol</text>
        <dbReference type="Rhea" id="RHEA:37983"/>
        <dbReference type="ChEBI" id="CHEBI:18185"/>
        <dbReference type="ChEBI" id="CHEBI:75921"/>
        <dbReference type="EC" id="5.5.1.24"/>
    </reaction>
</comment>
<comment type="catalytic activity">
    <reaction>
        <text>delta-tocotrienol = 6-geranylgeranyl-2-methylbenzene-1,4-diol</text>
        <dbReference type="Rhea" id="RHEA:38015"/>
        <dbReference type="ChEBI" id="CHEBI:33276"/>
        <dbReference type="ChEBI" id="CHEBI:75411"/>
        <dbReference type="EC" id="5.5.1.24"/>
    </reaction>
</comment>
<comment type="catalytic activity">
    <reaction>
        <text>gamma-tocotrienol = 6-geranylgeranyl-2,3-dimethylbenzene-1,4-diol</text>
        <dbReference type="Rhea" id="RHEA:38023"/>
        <dbReference type="ChEBI" id="CHEBI:33277"/>
        <dbReference type="ChEBI" id="CHEBI:75412"/>
        <dbReference type="EC" id="5.5.1.24"/>
    </reaction>
</comment>
<comment type="pathway">
    <text>Cofactor biosynthesis; tocopherol biosynthesis.</text>
</comment>
<comment type="subcellular location">
    <subcellularLocation>
        <location evidence="3 4 5">Plastid</location>
        <location evidence="3 4 5">Chloroplast</location>
        <location evidence="3 4 5">Plastoglobule</location>
    </subcellularLocation>
</comment>
<comment type="sequence caution" evidence="6">
    <conflict type="erroneous gene model prediction">
        <sequence resource="EMBL-CDS" id="CAA18584"/>
    </conflict>
</comment>
<comment type="sequence caution" evidence="6">
    <conflict type="erroneous gene model prediction">
        <sequence resource="EMBL-CDS" id="CAB79994"/>
    </conflict>
</comment>
<feature type="transit peptide" description="Chloroplast" evidence="1">
    <location>
        <begin position="1"/>
        <end position="76"/>
    </location>
</feature>
<feature type="chain" id="PRO_0000022561" description="Tocopherol cyclase, chloroplastic">
    <location>
        <begin position="77"/>
        <end position="488"/>
    </location>
</feature>
<proteinExistence type="evidence at protein level"/>
<name>TOCC_ARATH</name>
<organism>
    <name type="scientific">Arabidopsis thaliana</name>
    <name type="common">Mouse-ear cress</name>
    <dbReference type="NCBI Taxonomy" id="3702"/>
    <lineage>
        <taxon>Eukaryota</taxon>
        <taxon>Viridiplantae</taxon>
        <taxon>Streptophyta</taxon>
        <taxon>Embryophyta</taxon>
        <taxon>Tracheophyta</taxon>
        <taxon>Spermatophyta</taxon>
        <taxon>Magnoliopsida</taxon>
        <taxon>eudicotyledons</taxon>
        <taxon>Gunneridae</taxon>
        <taxon>Pentapetalae</taxon>
        <taxon>rosids</taxon>
        <taxon>malvids</taxon>
        <taxon>Brassicales</taxon>
        <taxon>Brassicaceae</taxon>
        <taxon>Camelineae</taxon>
        <taxon>Arabidopsis</taxon>
    </lineage>
</organism>
<keyword id="KW-0150">Chloroplast</keyword>
<keyword id="KW-0413">Isomerase</keyword>
<keyword id="KW-0934">Plastid</keyword>
<keyword id="KW-1185">Reference proteome</keyword>
<keyword id="KW-0809">Transit peptide</keyword>
<dbReference type="EC" id="5.5.1.24"/>
<dbReference type="EMBL" id="AF302188">
    <property type="protein sequence ID" value="AAK60503.1"/>
    <property type="molecule type" value="mRNA"/>
</dbReference>
<dbReference type="EMBL" id="AL022537">
    <property type="protein sequence ID" value="CAA18584.1"/>
    <property type="status" value="ALT_SEQ"/>
    <property type="molecule type" value="Genomic_DNA"/>
</dbReference>
<dbReference type="EMBL" id="AL161582">
    <property type="protein sequence ID" value="CAB79994.1"/>
    <property type="status" value="ALT_SEQ"/>
    <property type="molecule type" value="Genomic_DNA"/>
</dbReference>
<dbReference type="EMBL" id="CP002687">
    <property type="protein sequence ID" value="AEE86116.1"/>
    <property type="molecule type" value="Genomic_DNA"/>
</dbReference>
<dbReference type="RefSeq" id="NP_567906.1">
    <property type="nucleotide sequence ID" value="NM_119430.5"/>
</dbReference>
<dbReference type="FunCoup" id="Q94FY7">
    <property type="interactions" value="457"/>
</dbReference>
<dbReference type="STRING" id="3702.Q94FY7"/>
<dbReference type="SwissLipids" id="SLP:000001491"/>
<dbReference type="iPTMnet" id="Q94FY7"/>
<dbReference type="PaxDb" id="3702-AT4G32770.1"/>
<dbReference type="ProteomicsDB" id="234311"/>
<dbReference type="EnsemblPlants" id="AT4G32770.1">
    <property type="protein sequence ID" value="AT4G32770.1"/>
    <property type="gene ID" value="AT4G32770"/>
</dbReference>
<dbReference type="GeneID" id="829413"/>
<dbReference type="Gramene" id="AT4G32770.1">
    <property type="protein sequence ID" value="AT4G32770.1"/>
    <property type="gene ID" value="AT4G32770"/>
</dbReference>
<dbReference type="KEGG" id="ath:AT4G32770"/>
<dbReference type="Araport" id="AT4G32770"/>
<dbReference type="TAIR" id="AT4G32770">
    <property type="gene designation" value="VTE1"/>
</dbReference>
<dbReference type="eggNOG" id="ENOG502QQ9P">
    <property type="taxonomic scope" value="Eukaryota"/>
</dbReference>
<dbReference type="HOGENOM" id="CLU_048962_0_0_1"/>
<dbReference type="InParanoid" id="Q94FY7"/>
<dbReference type="OMA" id="PHSGYHW"/>
<dbReference type="PhylomeDB" id="Q94FY7"/>
<dbReference type="BRENDA" id="5.5.1.24">
    <property type="organism ID" value="399"/>
</dbReference>
<dbReference type="UniPathway" id="UPA00160"/>
<dbReference type="PRO" id="PR:Q94FY7"/>
<dbReference type="Proteomes" id="UP000006548">
    <property type="component" value="Chromosome 4"/>
</dbReference>
<dbReference type="ExpressionAtlas" id="Q94FY7">
    <property type="expression patterns" value="baseline and differential"/>
</dbReference>
<dbReference type="GO" id="GO:0009507">
    <property type="term" value="C:chloroplast"/>
    <property type="evidence" value="ECO:0007005"/>
    <property type="project" value="TAIR"/>
</dbReference>
<dbReference type="GO" id="GO:0009941">
    <property type="term" value="C:chloroplast envelope"/>
    <property type="evidence" value="ECO:0007005"/>
    <property type="project" value="TAIR"/>
</dbReference>
<dbReference type="GO" id="GO:0009706">
    <property type="term" value="C:chloroplast inner membrane"/>
    <property type="evidence" value="ECO:0000304"/>
    <property type="project" value="TAIR"/>
</dbReference>
<dbReference type="GO" id="GO:0009534">
    <property type="term" value="C:chloroplast thylakoid"/>
    <property type="evidence" value="ECO:0007005"/>
    <property type="project" value="TAIR"/>
</dbReference>
<dbReference type="GO" id="GO:0005886">
    <property type="term" value="C:plasma membrane"/>
    <property type="evidence" value="ECO:0007005"/>
    <property type="project" value="TAIR"/>
</dbReference>
<dbReference type="GO" id="GO:0010287">
    <property type="term" value="C:plastoglobule"/>
    <property type="evidence" value="ECO:0000314"/>
    <property type="project" value="TAIR"/>
</dbReference>
<dbReference type="GO" id="GO:0016853">
    <property type="term" value="F:isomerase activity"/>
    <property type="evidence" value="ECO:0007669"/>
    <property type="project" value="UniProtKB-KW"/>
</dbReference>
<dbReference type="GO" id="GO:0009976">
    <property type="term" value="F:tocopherol cyclase activity"/>
    <property type="evidence" value="ECO:0000314"/>
    <property type="project" value="TAIR"/>
</dbReference>
<dbReference type="GO" id="GO:0015994">
    <property type="term" value="P:chlorophyll metabolic process"/>
    <property type="evidence" value="ECO:0000316"/>
    <property type="project" value="TAIR"/>
</dbReference>
<dbReference type="GO" id="GO:0006631">
    <property type="term" value="P:fatty acid metabolic process"/>
    <property type="evidence" value="ECO:0000316"/>
    <property type="project" value="TAIR"/>
</dbReference>
<dbReference type="GO" id="GO:0009915">
    <property type="term" value="P:phloem sucrose loading"/>
    <property type="evidence" value="ECO:0000315"/>
    <property type="project" value="TAIR"/>
</dbReference>
<dbReference type="GO" id="GO:0031347">
    <property type="term" value="P:regulation of defense response"/>
    <property type="evidence" value="ECO:0000315"/>
    <property type="project" value="TAIR"/>
</dbReference>
<dbReference type="GO" id="GO:0009644">
    <property type="term" value="P:response to high light intensity"/>
    <property type="evidence" value="ECO:0000270"/>
    <property type="project" value="TAIR"/>
</dbReference>
<dbReference type="GO" id="GO:0006979">
    <property type="term" value="P:response to oxidative stress"/>
    <property type="evidence" value="ECO:0000270"/>
    <property type="project" value="TAIR"/>
</dbReference>
<dbReference type="GO" id="GO:0009266">
    <property type="term" value="P:response to temperature stimulus"/>
    <property type="evidence" value="ECO:0000315"/>
    <property type="project" value="TAIR"/>
</dbReference>
<dbReference type="GO" id="GO:0010189">
    <property type="term" value="P:vitamin E biosynthetic process"/>
    <property type="evidence" value="ECO:0000314"/>
    <property type="project" value="TAIR"/>
</dbReference>
<dbReference type="GO" id="GO:0016122">
    <property type="term" value="P:xanthophyll metabolic process"/>
    <property type="evidence" value="ECO:0000315"/>
    <property type="project" value="TAIR"/>
</dbReference>
<dbReference type="InterPro" id="IPR025893">
    <property type="entry name" value="Tocopherol_cyclase"/>
</dbReference>
<dbReference type="PANTHER" id="PTHR35309">
    <property type="match status" value="1"/>
</dbReference>
<dbReference type="PANTHER" id="PTHR35309:SF2">
    <property type="entry name" value="TOCOPHEROL CYCLASE, CHLOROPLASTIC"/>
    <property type="match status" value="1"/>
</dbReference>
<dbReference type="Pfam" id="PF14249">
    <property type="entry name" value="Tocopherol_cycl"/>
    <property type="match status" value="1"/>
</dbReference>
<protein>
    <recommendedName>
        <fullName>Tocopherol cyclase, chloroplastic</fullName>
        <ecNumber>5.5.1.24</ecNumber>
    </recommendedName>
    <alternativeName>
        <fullName>Sucrose export defective 1</fullName>
    </alternativeName>
    <alternativeName>
        <fullName>Vitamin E pathway gene 1 protein</fullName>
    </alternativeName>
</protein>
<sequence>MEIRSLIVSMNPNLSSFELSRPVSPLTRSLVPFRSTKLVPRSISRVSASISTPNSETDKISVKPVYVPTSPNRELRTPHSGYHFDGTPRKFFEGWYFRVSIPEKRESFCFMYSVENPAFRQSLSPLEVALYGPRFTGVGAQILGANDKYLCQYEQDSHNFWGDRHELVLGNTFSAVPGAKAPNKEVPPEEFNRRVSEGFQATPFWHQGHICDDGRTDYAETVKSARWEYSTRPVYGWGDVGAKQKSTAGWPAAFPVFEPHWQICMAGGLSTGWIEWGGERFEFRDAPSYSEKNWGGGFPRKWFWVQCNVFEGATGEVALTAGGGLRQLPGLTETYENAALVCVHYDGKMYEFVPWNGVVRWEMSPWGYWYITAENENHVVELEARTNEAGTPLRAPTTEVGLATACRDSCYGELKLQIWERLYDGSKGKVILETKSSMAAVEIGGGPWFGTWKGDTSNTPELLKQALQVPLDLESALGLVPFFKPPGL</sequence>
<gene>
    <name type="primary">VTE1</name>
    <name type="synonym">SXD1</name>
    <name type="ordered locus">At4g32770</name>
    <name type="ORF">F4D11.30</name>
</gene>
<evidence type="ECO:0000255" key="1"/>
<evidence type="ECO:0000269" key="2">
    <source>
    </source>
</evidence>
<evidence type="ECO:0000269" key="3">
    <source>
    </source>
</evidence>
<evidence type="ECO:0000269" key="4">
    <source>
    </source>
</evidence>
<evidence type="ECO:0000269" key="5">
    <source>
    </source>
</evidence>
<evidence type="ECO:0000305" key="6"/>
<accession>Q94FY7</accession>
<accession>O65524</accession>
<reference key="1">
    <citation type="journal article" date="2001" name="Plant Cell">
        <title>Sucrose export defective 1 encodes a novel protein implicated in chloroplast-to-nucleus signaling.</title>
        <authorList>
            <person name="Provencher L.M."/>
            <person name="Miao L."/>
            <person name="Sinha N."/>
            <person name="Lucas W.J."/>
        </authorList>
    </citation>
    <scope>NUCLEOTIDE SEQUENCE [MRNA]</scope>
    <source>
        <strain>cv. Columbia</strain>
    </source>
</reference>
<reference key="2">
    <citation type="journal article" date="1999" name="Nature">
        <title>Sequence and analysis of chromosome 4 of the plant Arabidopsis thaliana.</title>
        <authorList>
            <person name="Mayer K.F.X."/>
            <person name="Schueller C."/>
            <person name="Wambutt R."/>
            <person name="Murphy G."/>
            <person name="Volckaert G."/>
            <person name="Pohl T."/>
            <person name="Duesterhoeft A."/>
            <person name="Stiekema W."/>
            <person name="Entian K.-D."/>
            <person name="Terryn N."/>
            <person name="Harris B."/>
            <person name="Ansorge W."/>
            <person name="Brandt P."/>
            <person name="Grivell L.A."/>
            <person name="Rieger M."/>
            <person name="Weichselgartner M."/>
            <person name="de Simone V."/>
            <person name="Obermaier B."/>
            <person name="Mache R."/>
            <person name="Mueller M."/>
            <person name="Kreis M."/>
            <person name="Delseny M."/>
            <person name="Puigdomenech P."/>
            <person name="Watson M."/>
            <person name="Schmidtheini T."/>
            <person name="Reichert B."/>
            <person name="Portetelle D."/>
            <person name="Perez-Alonso M."/>
            <person name="Boutry M."/>
            <person name="Bancroft I."/>
            <person name="Vos P."/>
            <person name="Hoheisel J."/>
            <person name="Zimmermann W."/>
            <person name="Wedler H."/>
            <person name="Ridley P."/>
            <person name="Langham S.-A."/>
            <person name="McCullagh B."/>
            <person name="Bilham L."/>
            <person name="Robben J."/>
            <person name="van der Schueren J."/>
            <person name="Grymonprez B."/>
            <person name="Chuang Y.-J."/>
            <person name="Vandenbussche F."/>
            <person name="Braeken M."/>
            <person name="Weltjens I."/>
            <person name="Voet M."/>
            <person name="Bastiaens I."/>
            <person name="Aert R."/>
            <person name="Defoor E."/>
            <person name="Weitzenegger T."/>
            <person name="Bothe G."/>
            <person name="Ramsperger U."/>
            <person name="Hilbert H."/>
            <person name="Braun M."/>
            <person name="Holzer E."/>
            <person name="Brandt A."/>
            <person name="Peters S."/>
            <person name="van Staveren M."/>
            <person name="Dirkse W."/>
            <person name="Mooijman P."/>
            <person name="Klein Lankhorst R."/>
            <person name="Rose M."/>
            <person name="Hauf J."/>
            <person name="Koetter P."/>
            <person name="Berneiser S."/>
            <person name="Hempel S."/>
            <person name="Feldpausch M."/>
            <person name="Lamberth S."/>
            <person name="Van den Daele H."/>
            <person name="De Keyser A."/>
            <person name="Buysshaert C."/>
            <person name="Gielen J."/>
            <person name="Villarroel R."/>
            <person name="De Clercq R."/>
            <person name="van Montagu M."/>
            <person name="Rogers J."/>
            <person name="Cronin A."/>
            <person name="Quail M.A."/>
            <person name="Bray-Allen S."/>
            <person name="Clark L."/>
            <person name="Doggett J."/>
            <person name="Hall S."/>
            <person name="Kay M."/>
            <person name="Lennard N."/>
            <person name="McLay K."/>
            <person name="Mayes R."/>
            <person name="Pettett A."/>
            <person name="Rajandream M.A."/>
            <person name="Lyne M."/>
            <person name="Benes V."/>
            <person name="Rechmann S."/>
            <person name="Borkova D."/>
            <person name="Bloecker H."/>
            <person name="Scharfe M."/>
            <person name="Grimm M."/>
            <person name="Loehnert T.-H."/>
            <person name="Dose S."/>
            <person name="de Haan M."/>
            <person name="Maarse A.C."/>
            <person name="Schaefer M."/>
            <person name="Mueller-Auer S."/>
            <person name="Gabel C."/>
            <person name="Fuchs M."/>
            <person name="Fartmann B."/>
            <person name="Granderath K."/>
            <person name="Dauner D."/>
            <person name="Herzl A."/>
            <person name="Neumann S."/>
            <person name="Argiriou A."/>
            <person name="Vitale D."/>
            <person name="Liguori R."/>
            <person name="Piravandi E."/>
            <person name="Massenet O."/>
            <person name="Quigley F."/>
            <person name="Clabauld G."/>
            <person name="Muendlein A."/>
            <person name="Felber R."/>
            <person name="Schnabl S."/>
            <person name="Hiller R."/>
            <person name="Schmidt W."/>
            <person name="Lecharny A."/>
            <person name="Aubourg S."/>
            <person name="Chefdor F."/>
            <person name="Cooke R."/>
            <person name="Berger C."/>
            <person name="Monfort A."/>
            <person name="Casacuberta E."/>
            <person name="Gibbons T."/>
            <person name="Weber N."/>
            <person name="Vandenbol M."/>
            <person name="Bargues M."/>
            <person name="Terol J."/>
            <person name="Torres A."/>
            <person name="Perez-Perez A."/>
            <person name="Purnelle B."/>
            <person name="Bent E."/>
            <person name="Johnson S."/>
            <person name="Tacon D."/>
            <person name="Jesse T."/>
            <person name="Heijnen L."/>
            <person name="Schwarz S."/>
            <person name="Scholler P."/>
            <person name="Heber S."/>
            <person name="Francs P."/>
            <person name="Bielke C."/>
            <person name="Frishman D."/>
            <person name="Haase D."/>
            <person name="Lemcke K."/>
            <person name="Mewes H.-W."/>
            <person name="Stocker S."/>
            <person name="Zaccaria P."/>
            <person name="Bevan M."/>
            <person name="Wilson R.K."/>
            <person name="de la Bastide M."/>
            <person name="Habermann K."/>
            <person name="Parnell L."/>
            <person name="Dedhia N."/>
            <person name="Gnoj L."/>
            <person name="Schutz K."/>
            <person name="Huang E."/>
            <person name="Spiegel L."/>
            <person name="Sekhon M."/>
            <person name="Murray J."/>
            <person name="Sheet P."/>
            <person name="Cordes M."/>
            <person name="Abu-Threideh J."/>
            <person name="Stoneking T."/>
            <person name="Kalicki J."/>
            <person name="Graves T."/>
            <person name="Harmon G."/>
            <person name="Edwards J."/>
            <person name="Latreille P."/>
            <person name="Courtney L."/>
            <person name="Cloud J."/>
            <person name="Abbott A."/>
            <person name="Scott K."/>
            <person name="Johnson D."/>
            <person name="Minx P."/>
            <person name="Bentley D."/>
            <person name="Fulton B."/>
            <person name="Miller N."/>
            <person name="Greco T."/>
            <person name="Kemp K."/>
            <person name="Kramer J."/>
            <person name="Fulton L."/>
            <person name="Mardis E."/>
            <person name="Dante M."/>
            <person name="Pepin K."/>
            <person name="Hillier L.W."/>
            <person name="Nelson J."/>
            <person name="Spieth J."/>
            <person name="Ryan E."/>
            <person name="Andrews S."/>
            <person name="Geisel C."/>
            <person name="Layman D."/>
            <person name="Du H."/>
            <person name="Ali J."/>
            <person name="Berghoff A."/>
            <person name="Jones K."/>
            <person name="Drone K."/>
            <person name="Cotton M."/>
            <person name="Joshu C."/>
            <person name="Antonoiu B."/>
            <person name="Zidanic M."/>
            <person name="Strong C."/>
            <person name="Sun H."/>
            <person name="Lamar B."/>
            <person name="Yordan C."/>
            <person name="Ma P."/>
            <person name="Zhong J."/>
            <person name="Preston R."/>
            <person name="Vil D."/>
            <person name="Shekher M."/>
            <person name="Matero A."/>
            <person name="Shah R."/>
            <person name="Swaby I.K."/>
            <person name="O'Shaughnessy A."/>
            <person name="Rodriguez M."/>
            <person name="Hoffman J."/>
            <person name="Till S."/>
            <person name="Granat S."/>
            <person name="Shohdy N."/>
            <person name="Hasegawa A."/>
            <person name="Hameed A."/>
            <person name="Lodhi M."/>
            <person name="Johnson A."/>
            <person name="Chen E."/>
            <person name="Marra M.A."/>
            <person name="Martienssen R."/>
            <person name="McCombie W.R."/>
        </authorList>
    </citation>
    <scope>NUCLEOTIDE SEQUENCE [LARGE SCALE GENOMIC DNA]</scope>
    <source>
        <strain>cv. Columbia</strain>
    </source>
</reference>
<reference key="3">
    <citation type="journal article" date="2017" name="Plant J.">
        <title>Araport11: a complete reannotation of the Arabidopsis thaliana reference genome.</title>
        <authorList>
            <person name="Cheng C.Y."/>
            <person name="Krishnakumar V."/>
            <person name="Chan A.P."/>
            <person name="Thibaud-Nissen F."/>
            <person name="Schobel S."/>
            <person name="Town C.D."/>
        </authorList>
    </citation>
    <scope>GENOME REANNOTATION</scope>
    <source>
        <strain>cv. Columbia</strain>
    </source>
</reference>
<reference key="4">
    <citation type="journal article" date="2002" name="Proc. Natl. Acad. Sci. U.S.A.">
        <title>Isolation of an Arabidopsis mutant lacking vitamin E and identification of a cyclase essential for all tocopherol biosynthesis.</title>
        <authorList>
            <person name="Porfirova S."/>
            <person name="Bergmueller E."/>
            <person name="Tropf S."/>
            <person name="Lemke R."/>
            <person name="Doermann P."/>
        </authorList>
    </citation>
    <scope>FUNCTION</scope>
</reference>
<reference key="5">
    <citation type="journal article" date="2006" name="J. Biol. Chem.">
        <title>Tocopherol cyclase (VTE1) localization and vitamin E accumulation in chloroplast plastoglobule lipoprotein particles.</title>
        <authorList>
            <person name="Vidi P.-A."/>
            <person name="Kanwischer M."/>
            <person name="Baginsky S."/>
            <person name="Austin J.R."/>
            <person name="Csucs G."/>
            <person name="Doermann P."/>
            <person name="Kessler F."/>
            <person name="Brehelin C."/>
        </authorList>
    </citation>
    <scope>SUBCELLULAR LOCATION</scope>
    <source>
        <strain>cv. Col-2</strain>
    </source>
</reference>
<reference key="6">
    <citation type="journal article" date="2006" name="Plant Physiol.">
        <title>Protein profiling of plastoglobules in chloroplasts and chromoplasts. A surprising site for differential accumulation of metabolic enzymes.</title>
        <authorList>
            <person name="Ytterberg A.J."/>
            <person name="Peltier J.-B."/>
            <person name="van Wijk K.J."/>
        </authorList>
    </citation>
    <scope>IDENTIFICATION BY MASS SPECTROMETRY</scope>
    <scope>SUBCELLULAR LOCATION [LARGE SCALE ANALYSIS]</scope>
    <source>
        <strain>cv. Columbia</strain>
    </source>
</reference>
<reference key="7">
    <citation type="journal article" date="2012" name="Plant Physiol.">
        <title>The functional network of the Arabidopsis plastoglobule proteome based on quantitative proteomics and genome-wide coexpression analysis.</title>
        <authorList>
            <person name="Lundquist P.K."/>
            <person name="Poliakov A."/>
            <person name="Bhuiyan N.H."/>
            <person name="Zybailov B."/>
            <person name="Sun Q."/>
            <person name="van Wijk K.J."/>
        </authorList>
    </citation>
    <scope>IDENTIFICATION BY MASS SPECTROMETRY</scope>
    <scope>SUBCELLULAR LOCATION [LARGE SCALE ANALYSIS]</scope>
    <source>
        <strain>cv. Columbia</strain>
    </source>
</reference>